<accession>Q04513</accession>
<evidence type="ECO:0000250" key="1"/>
<evidence type="ECO:0000255" key="2"/>
<evidence type="ECO:0000255" key="3">
    <source>
        <dbReference type="PROSITE-ProRule" id="PRU01008"/>
    </source>
</evidence>
<evidence type="ECO:0000305" key="4"/>
<keyword id="KW-0021">Allosteric enzyme</keyword>
<keyword id="KW-0028">Amino-acid biosynthesis</keyword>
<keyword id="KW-0100">Branched-chain amino acid biosynthesis</keyword>
<keyword id="KW-0412">Isoleucine biosynthesis</keyword>
<keyword id="KW-0456">Lyase</keyword>
<keyword id="KW-0663">Pyridoxal phosphate</keyword>
<keyword id="KW-1185">Reference proteome</keyword>
<gene>
    <name type="primary">ilvA</name>
    <name type="ordered locus">Cgl2127</name>
    <name type="ordered locus">cg2334</name>
</gene>
<name>ILVA_CORGL</name>
<proteinExistence type="inferred from homology"/>
<feature type="chain" id="PRO_0000185572" description="L-threonine dehydratase biosynthetic IlvA">
    <location>
        <begin position="1"/>
        <end position="436"/>
    </location>
</feature>
<feature type="domain" description="ACT-like" evidence="3">
    <location>
        <begin position="353"/>
        <end position="427"/>
    </location>
</feature>
<feature type="region of interest" description="Catalytic" evidence="2">
    <location>
        <begin position="1"/>
        <end position="357"/>
    </location>
</feature>
<feature type="region of interest" description="Regulatory" evidence="2">
    <location>
        <begin position="358"/>
        <end position="436"/>
    </location>
</feature>
<feature type="binding site" evidence="1">
    <location>
        <position position="97"/>
    </location>
    <ligand>
        <name>pyridoxal 5'-phosphate</name>
        <dbReference type="ChEBI" id="CHEBI:597326"/>
    </ligand>
</feature>
<feature type="binding site" evidence="1">
    <location>
        <begin position="203"/>
        <end position="207"/>
    </location>
    <ligand>
        <name>pyridoxal 5'-phosphate</name>
        <dbReference type="ChEBI" id="CHEBI:597326"/>
    </ligand>
</feature>
<feature type="binding site" evidence="1">
    <location>
        <position position="329"/>
    </location>
    <ligand>
        <name>pyridoxal 5'-phosphate</name>
        <dbReference type="ChEBI" id="CHEBI:597326"/>
    </ligand>
</feature>
<feature type="modified residue" description="N6-(pyridoxal phosphate)lysine" evidence="1">
    <location>
        <position position="70"/>
    </location>
</feature>
<feature type="sequence conflict" description="In Ref. 1; AAA23303." evidence="4" ref="1">
    <original>LT</original>
    <variation>SP</variation>
    <location>
        <begin position="81"/>
        <end position="82"/>
    </location>
</feature>
<feature type="sequence conflict" description="In Ref. 1; AAA23303." evidence="4" ref="1">
    <original>A</original>
    <variation>E</variation>
    <location>
        <position position="258"/>
    </location>
</feature>
<reference key="1">
    <citation type="journal article" date="1992" name="J. Bacteriol.">
        <title>Functional and structural analyses of threonine dehydratase from Corynebacterium glutamicum.</title>
        <authorList>
            <person name="Mockel B."/>
            <person name="Eggeling L."/>
            <person name="Sahm H."/>
        </authorList>
    </citation>
    <scope>NUCLEOTIDE SEQUENCE [GENOMIC DNA]</scope>
    <source>
        <strain>ATCC 13032 / DSM 20300 / JCM 1318 / BCRC 11384 / CCUG 27702 / LMG 3730 / NBRC 12168 / NCIMB 10025 / NRRL B-2784 / 534</strain>
    </source>
</reference>
<reference key="2">
    <citation type="journal article" date="2003" name="Appl. Microbiol. Biotechnol.">
        <title>The Corynebacterium glutamicum genome: features and impacts on biotechnological processes.</title>
        <authorList>
            <person name="Ikeda M."/>
            <person name="Nakagawa S."/>
        </authorList>
    </citation>
    <scope>NUCLEOTIDE SEQUENCE [LARGE SCALE GENOMIC DNA]</scope>
    <source>
        <strain>ATCC 13032 / DSM 20300 / JCM 1318 / BCRC 11384 / CCUG 27702 / LMG 3730 / NBRC 12168 / NCIMB 10025 / NRRL B-2784 / 534</strain>
    </source>
</reference>
<reference key="3">
    <citation type="journal article" date="2003" name="J. Biotechnol.">
        <title>The complete Corynebacterium glutamicum ATCC 13032 genome sequence and its impact on the production of L-aspartate-derived amino acids and vitamins.</title>
        <authorList>
            <person name="Kalinowski J."/>
            <person name="Bathe B."/>
            <person name="Bartels D."/>
            <person name="Bischoff N."/>
            <person name="Bott M."/>
            <person name="Burkovski A."/>
            <person name="Dusch N."/>
            <person name="Eggeling L."/>
            <person name="Eikmanns B.J."/>
            <person name="Gaigalat L."/>
            <person name="Goesmann A."/>
            <person name="Hartmann M."/>
            <person name="Huthmacher K."/>
            <person name="Kraemer R."/>
            <person name="Linke B."/>
            <person name="McHardy A.C."/>
            <person name="Meyer F."/>
            <person name="Moeckel B."/>
            <person name="Pfefferle W."/>
            <person name="Puehler A."/>
            <person name="Rey D.A."/>
            <person name="Rueckert C."/>
            <person name="Rupp O."/>
            <person name="Sahm H."/>
            <person name="Wendisch V.F."/>
            <person name="Wiegraebe I."/>
            <person name="Tauch A."/>
        </authorList>
    </citation>
    <scope>NUCLEOTIDE SEQUENCE [LARGE SCALE GENOMIC DNA]</scope>
    <source>
        <strain>ATCC 13032 / DSM 20300 / JCM 1318 / BCRC 11384 / CCUG 27702 / LMG 3730 / NBRC 12168 / NCIMB 10025 / NRRL B-2784 / 534</strain>
    </source>
</reference>
<protein>
    <recommendedName>
        <fullName>L-threonine dehydratase biosynthetic IlvA</fullName>
        <ecNumber>4.3.1.19</ecNumber>
    </recommendedName>
    <alternativeName>
        <fullName>Threonine deaminase</fullName>
    </alternativeName>
</protein>
<dbReference type="EC" id="4.3.1.19"/>
<dbReference type="EMBL" id="L01508">
    <property type="protein sequence ID" value="AAA23303.1"/>
    <property type="molecule type" value="Genomic_DNA"/>
</dbReference>
<dbReference type="EMBL" id="BA000036">
    <property type="protein sequence ID" value="BAB99520.1"/>
    <property type="molecule type" value="Genomic_DNA"/>
</dbReference>
<dbReference type="EMBL" id="BX927154">
    <property type="protein sequence ID" value="CAF20464.1"/>
    <property type="molecule type" value="Genomic_DNA"/>
</dbReference>
<dbReference type="PIR" id="A47044">
    <property type="entry name" value="A47044"/>
</dbReference>
<dbReference type="RefSeq" id="NP_601328.2">
    <property type="nucleotide sequence ID" value="NC_003450.3"/>
</dbReference>
<dbReference type="RefSeq" id="WP_003862033.1">
    <property type="nucleotide sequence ID" value="NC_006958.1"/>
</dbReference>
<dbReference type="SMR" id="Q04513"/>
<dbReference type="STRING" id="196627.cg2334"/>
<dbReference type="GeneID" id="1020078"/>
<dbReference type="KEGG" id="cgb:cg2334"/>
<dbReference type="KEGG" id="cgl:Cgl2127"/>
<dbReference type="PATRIC" id="fig|196627.13.peg.2065"/>
<dbReference type="eggNOG" id="COG1171">
    <property type="taxonomic scope" value="Bacteria"/>
</dbReference>
<dbReference type="HOGENOM" id="CLU_021152_4_2_11"/>
<dbReference type="OrthoDB" id="9811476at2"/>
<dbReference type="BioCyc" id="CORYNE:G18NG-11719-MONOMER"/>
<dbReference type="BRENDA" id="4.3.1.19">
    <property type="organism ID" value="960"/>
</dbReference>
<dbReference type="UniPathway" id="UPA00047">
    <property type="reaction ID" value="UER00054"/>
</dbReference>
<dbReference type="Proteomes" id="UP000000582">
    <property type="component" value="Chromosome"/>
</dbReference>
<dbReference type="Proteomes" id="UP000001009">
    <property type="component" value="Chromosome"/>
</dbReference>
<dbReference type="GO" id="GO:0003941">
    <property type="term" value="F:L-serine ammonia-lyase activity"/>
    <property type="evidence" value="ECO:0007669"/>
    <property type="project" value="TreeGrafter"/>
</dbReference>
<dbReference type="GO" id="GO:0030170">
    <property type="term" value="F:pyridoxal phosphate binding"/>
    <property type="evidence" value="ECO:0007669"/>
    <property type="project" value="InterPro"/>
</dbReference>
<dbReference type="GO" id="GO:0004794">
    <property type="term" value="F:threonine deaminase activity"/>
    <property type="evidence" value="ECO:0007669"/>
    <property type="project" value="UniProtKB-EC"/>
</dbReference>
<dbReference type="GO" id="GO:0009097">
    <property type="term" value="P:isoleucine biosynthetic process"/>
    <property type="evidence" value="ECO:0007669"/>
    <property type="project" value="UniProtKB-UniPathway"/>
</dbReference>
<dbReference type="GO" id="GO:0006565">
    <property type="term" value="P:L-serine catabolic process"/>
    <property type="evidence" value="ECO:0007669"/>
    <property type="project" value="TreeGrafter"/>
</dbReference>
<dbReference type="GO" id="GO:0006567">
    <property type="term" value="P:threonine catabolic process"/>
    <property type="evidence" value="ECO:0007669"/>
    <property type="project" value="TreeGrafter"/>
</dbReference>
<dbReference type="GO" id="GO:0006566">
    <property type="term" value="P:threonine metabolic process"/>
    <property type="evidence" value="ECO:0000250"/>
    <property type="project" value="UniProtKB"/>
</dbReference>
<dbReference type="CDD" id="cd04907">
    <property type="entry name" value="ACT_ThrD-I_2"/>
    <property type="match status" value="1"/>
</dbReference>
<dbReference type="CDD" id="cd01562">
    <property type="entry name" value="Thr-dehyd"/>
    <property type="match status" value="1"/>
</dbReference>
<dbReference type="FunFam" id="3.40.1020.10:FF:000002">
    <property type="entry name" value="L-threonine dehydratase"/>
    <property type="match status" value="1"/>
</dbReference>
<dbReference type="FunFam" id="3.40.50.1100:FF:000005">
    <property type="entry name" value="Threonine dehydratase catabolic"/>
    <property type="match status" value="1"/>
</dbReference>
<dbReference type="Gene3D" id="3.40.50.1100">
    <property type="match status" value="2"/>
</dbReference>
<dbReference type="Gene3D" id="3.40.1020.10">
    <property type="entry name" value="Biosynthetic Threonine Deaminase, Domain 3"/>
    <property type="match status" value="1"/>
</dbReference>
<dbReference type="InterPro" id="IPR011820">
    <property type="entry name" value="IlvA"/>
</dbReference>
<dbReference type="InterPro" id="IPR050147">
    <property type="entry name" value="Ser/Thr_Dehydratase"/>
</dbReference>
<dbReference type="InterPro" id="IPR000634">
    <property type="entry name" value="Ser/Thr_deHydtase_PyrdxlP-BS"/>
</dbReference>
<dbReference type="InterPro" id="IPR001721">
    <property type="entry name" value="TD_ACT-like"/>
</dbReference>
<dbReference type="InterPro" id="IPR038110">
    <property type="entry name" value="TD_ACT-like_sf"/>
</dbReference>
<dbReference type="InterPro" id="IPR001926">
    <property type="entry name" value="TrpB-like_PALP"/>
</dbReference>
<dbReference type="InterPro" id="IPR036052">
    <property type="entry name" value="TrpB-like_PALP_sf"/>
</dbReference>
<dbReference type="NCBIfam" id="NF006390">
    <property type="entry name" value="PRK08639.1"/>
    <property type="match status" value="1"/>
</dbReference>
<dbReference type="NCBIfam" id="TIGR02079">
    <property type="entry name" value="THD1"/>
    <property type="match status" value="1"/>
</dbReference>
<dbReference type="PANTHER" id="PTHR48078:SF11">
    <property type="entry name" value="THREONINE DEHYDRATASE, MITOCHONDRIAL"/>
    <property type="match status" value="1"/>
</dbReference>
<dbReference type="PANTHER" id="PTHR48078">
    <property type="entry name" value="THREONINE DEHYDRATASE, MITOCHONDRIAL-RELATED"/>
    <property type="match status" value="1"/>
</dbReference>
<dbReference type="Pfam" id="PF00291">
    <property type="entry name" value="PALP"/>
    <property type="match status" value="1"/>
</dbReference>
<dbReference type="Pfam" id="PF00585">
    <property type="entry name" value="Thr_dehydrat_C"/>
    <property type="match status" value="1"/>
</dbReference>
<dbReference type="SUPFAM" id="SSF53686">
    <property type="entry name" value="Tryptophan synthase beta subunit-like PLP-dependent enzymes"/>
    <property type="match status" value="1"/>
</dbReference>
<dbReference type="PROSITE" id="PS51672">
    <property type="entry name" value="ACT_LIKE"/>
    <property type="match status" value="1"/>
</dbReference>
<dbReference type="PROSITE" id="PS00165">
    <property type="entry name" value="DEHYDRATASE_SER_THR"/>
    <property type="match status" value="1"/>
</dbReference>
<sequence>MSETYVSEKSPGVMASGAELIRAADIQTAQARISSVIAPTPLQYCPRLSEETGAEIYLKREDLQDVRSYKIRGALNSGAQLTQEQRDAGIVAASAGNHAQGVAYVCKSLGVQGRIYVPVQTPKQKRDRIMVHGGEFVSLVVTGNNFDEASAAAHEDAERTGATLIEPFDARNTVIGQGTVAAEILSQLTSMGKSADHVMVPVGGGGLLAGVVSYMADMAPRTAIVGIEPAGAASMQAALHNGGPITLETVDPFVDGAAVKRVGDLNYTIVEKNQGRVHMMSATEGAVCTEMLDLYQNEGIIAEPAGALSIAGLKEMSFAPGSVVVCIISGGNNDVLRYAEIAERSLVHRGLKHYFLVNFPQKPGQLRHFLEDILGPDDDITLFEYLKRNNRETGTALVGIHLSEASGLDSLLERMEESAIDSRRLEPGTPEYEYLT</sequence>
<comment type="function">
    <text evidence="1">Catalyzes the anaerobic formation of alpha-ketobutyrate and ammonia from threonine in a two-step reaction. The first step involved a dehydration of threonine and a production of enamine intermediates (aminocrotonate), which tautomerizes to its imine form (iminobutyrate). Both intermediates are unstable and short-lived. The second step is the nonenzymatic hydrolysis of the enamine/imine intermediates to form 2-ketobutyrate and free ammonia. In the low water environment of the cell, the second step is accelerated by RidA (By similarity).</text>
</comment>
<comment type="catalytic activity">
    <reaction>
        <text>L-threonine = 2-oxobutanoate + NH4(+)</text>
        <dbReference type="Rhea" id="RHEA:22108"/>
        <dbReference type="ChEBI" id="CHEBI:16763"/>
        <dbReference type="ChEBI" id="CHEBI:28938"/>
        <dbReference type="ChEBI" id="CHEBI:57926"/>
        <dbReference type="EC" id="4.3.1.19"/>
    </reaction>
</comment>
<comment type="cofactor">
    <cofactor evidence="1">
        <name>pyridoxal 5'-phosphate</name>
        <dbReference type="ChEBI" id="CHEBI:597326"/>
    </cofactor>
</comment>
<comment type="pathway">
    <text>Amino-acid biosynthesis; L-isoleucine biosynthesis; 2-oxobutanoate from L-threonine: step 1/1.</text>
</comment>
<comment type="subunit">
    <text evidence="1">Homotetramer.</text>
</comment>
<comment type="similarity">
    <text evidence="4">Belongs to the serine/threonine dehydratase family.</text>
</comment>
<organism>
    <name type="scientific">Corynebacterium glutamicum (strain ATCC 13032 / DSM 20300 / JCM 1318 / BCRC 11384 / CCUG 27702 / LMG 3730 / NBRC 12168 / NCIMB 10025 / NRRL B-2784 / 534)</name>
    <dbReference type="NCBI Taxonomy" id="196627"/>
    <lineage>
        <taxon>Bacteria</taxon>
        <taxon>Bacillati</taxon>
        <taxon>Actinomycetota</taxon>
        <taxon>Actinomycetes</taxon>
        <taxon>Mycobacteriales</taxon>
        <taxon>Corynebacteriaceae</taxon>
        <taxon>Corynebacterium</taxon>
    </lineage>
</organism>